<organism>
    <name type="scientific">Mus musculus</name>
    <name type="common">Mouse</name>
    <dbReference type="NCBI Taxonomy" id="10090"/>
    <lineage>
        <taxon>Eukaryota</taxon>
        <taxon>Metazoa</taxon>
        <taxon>Chordata</taxon>
        <taxon>Craniata</taxon>
        <taxon>Vertebrata</taxon>
        <taxon>Euteleostomi</taxon>
        <taxon>Mammalia</taxon>
        <taxon>Eutheria</taxon>
        <taxon>Euarchontoglires</taxon>
        <taxon>Glires</taxon>
        <taxon>Rodentia</taxon>
        <taxon>Myomorpha</taxon>
        <taxon>Muroidea</taxon>
        <taxon>Muridae</taxon>
        <taxon>Murinae</taxon>
        <taxon>Mus</taxon>
        <taxon>Mus</taxon>
    </lineage>
</organism>
<proteinExistence type="evidence at transcript level"/>
<protein>
    <recommendedName>
        <fullName>C-C motif chemokine 25</fullName>
    </recommendedName>
    <alternativeName>
        <fullName>Chemokine TECK</fullName>
    </alternativeName>
    <alternativeName>
        <fullName>Small-inducible cytokine A25</fullName>
    </alternativeName>
    <alternativeName>
        <fullName>Thymus-expressed chemokine</fullName>
    </alternativeName>
</protein>
<accession>O35903</accession>
<accession>Q9QYY6</accession>
<evidence type="ECO:0000250" key="1"/>
<evidence type="ECO:0000255" key="2"/>
<evidence type="ECO:0000256" key="3">
    <source>
        <dbReference type="SAM" id="MobiDB-lite"/>
    </source>
</evidence>
<evidence type="ECO:0000305" key="4"/>
<reference key="1">
    <citation type="journal article" date="1997" name="Immunity">
        <title>TECK: a novel CC chemokine specifically expressed by thymic dendritic cells and potentially involved in T cell development.</title>
        <authorList>
            <person name="Vicari A.P."/>
            <person name="Figueroa D.J."/>
            <person name="Hedrick J.A."/>
            <person name="Foster J.S."/>
            <person name="Singh K.P."/>
            <person name="Menon S."/>
            <person name="Copeland N.G."/>
            <person name="Gilbert D.J."/>
            <person name="Jenkins N.A."/>
            <person name="Bacon K.B."/>
            <person name="Zlotnik A."/>
        </authorList>
    </citation>
    <scope>NUCLEOTIDE SEQUENCE [MRNA]</scope>
    <source>
        <tissue>Thymus</tissue>
    </source>
</reference>
<reference key="2">
    <citation type="journal article" date="2000" name="Eur. J. Immunol.">
        <title>The chemokine TECK is expressed by thymic and intestinal epithelial cells and attracts double- and single-positive thymocytes expressing the TECK receptor CCR9.</title>
        <authorList>
            <person name="Wurbel M.A."/>
            <person name="Philippe J.-M."/>
            <person name="Nguyen C."/>
            <person name="Victorero G."/>
            <person name="Freeman T."/>
            <person name="Wooding P."/>
            <person name="Miazek A."/>
            <person name="Mattei M.-G."/>
            <person name="Malissen M."/>
            <person name="Jordan B.R."/>
            <person name="Malissen B."/>
            <person name="Carrier A."/>
            <person name="Naquet P."/>
        </authorList>
    </citation>
    <scope>NUCLEOTIDE SEQUENCE [MRNA]</scope>
</reference>
<reference key="3">
    <citation type="journal article" date="2006" name="J. Immunol.">
        <title>Functional characterization of the CCL25 promoter in small intestinal epithelial cells suggests a regulatory role for caudal-related homeobox (Cdx) transcription factors.</title>
        <authorList>
            <person name="Ericsson A."/>
            <person name="Kotarsky K."/>
            <person name="Svensson M."/>
            <person name="Sigvardsson M."/>
            <person name="Agace W."/>
        </authorList>
    </citation>
    <scope>NUCLEOTIDE SEQUENCE [MRNA]</scope>
    <source>
        <strain>C57BL/6J</strain>
        <tissue>Small intestine</tissue>
    </source>
</reference>
<reference key="4">
    <citation type="journal article" date="2005" name="Science">
        <title>The transcriptional landscape of the mammalian genome.</title>
        <authorList>
            <person name="Carninci P."/>
            <person name="Kasukawa T."/>
            <person name="Katayama S."/>
            <person name="Gough J."/>
            <person name="Frith M.C."/>
            <person name="Maeda N."/>
            <person name="Oyama R."/>
            <person name="Ravasi T."/>
            <person name="Lenhard B."/>
            <person name="Wells C."/>
            <person name="Kodzius R."/>
            <person name="Shimokawa K."/>
            <person name="Bajic V.B."/>
            <person name="Brenner S.E."/>
            <person name="Batalov S."/>
            <person name="Forrest A.R."/>
            <person name="Zavolan M."/>
            <person name="Davis M.J."/>
            <person name="Wilming L.G."/>
            <person name="Aidinis V."/>
            <person name="Allen J.E."/>
            <person name="Ambesi-Impiombato A."/>
            <person name="Apweiler R."/>
            <person name="Aturaliya R.N."/>
            <person name="Bailey T.L."/>
            <person name="Bansal M."/>
            <person name="Baxter L."/>
            <person name="Beisel K.W."/>
            <person name="Bersano T."/>
            <person name="Bono H."/>
            <person name="Chalk A.M."/>
            <person name="Chiu K.P."/>
            <person name="Choudhary V."/>
            <person name="Christoffels A."/>
            <person name="Clutterbuck D.R."/>
            <person name="Crowe M.L."/>
            <person name="Dalla E."/>
            <person name="Dalrymple B.P."/>
            <person name="de Bono B."/>
            <person name="Della Gatta G."/>
            <person name="di Bernardo D."/>
            <person name="Down T."/>
            <person name="Engstrom P."/>
            <person name="Fagiolini M."/>
            <person name="Faulkner G."/>
            <person name="Fletcher C.F."/>
            <person name="Fukushima T."/>
            <person name="Furuno M."/>
            <person name="Futaki S."/>
            <person name="Gariboldi M."/>
            <person name="Georgii-Hemming P."/>
            <person name="Gingeras T.R."/>
            <person name="Gojobori T."/>
            <person name="Green R.E."/>
            <person name="Gustincich S."/>
            <person name="Harbers M."/>
            <person name="Hayashi Y."/>
            <person name="Hensch T.K."/>
            <person name="Hirokawa N."/>
            <person name="Hill D."/>
            <person name="Huminiecki L."/>
            <person name="Iacono M."/>
            <person name="Ikeo K."/>
            <person name="Iwama A."/>
            <person name="Ishikawa T."/>
            <person name="Jakt M."/>
            <person name="Kanapin A."/>
            <person name="Katoh M."/>
            <person name="Kawasawa Y."/>
            <person name="Kelso J."/>
            <person name="Kitamura H."/>
            <person name="Kitano H."/>
            <person name="Kollias G."/>
            <person name="Krishnan S.P."/>
            <person name="Kruger A."/>
            <person name="Kummerfeld S.K."/>
            <person name="Kurochkin I.V."/>
            <person name="Lareau L.F."/>
            <person name="Lazarevic D."/>
            <person name="Lipovich L."/>
            <person name="Liu J."/>
            <person name="Liuni S."/>
            <person name="McWilliam S."/>
            <person name="Madan Babu M."/>
            <person name="Madera M."/>
            <person name="Marchionni L."/>
            <person name="Matsuda H."/>
            <person name="Matsuzawa S."/>
            <person name="Miki H."/>
            <person name="Mignone F."/>
            <person name="Miyake S."/>
            <person name="Morris K."/>
            <person name="Mottagui-Tabar S."/>
            <person name="Mulder N."/>
            <person name="Nakano N."/>
            <person name="Nakauchi H."/>
            <person name="Ng P."/>
            <person name="Nilsson R."/>
            <person name="Nishiguchi S."/>
            <person name="Nishikawa S."/>
            <person name="Nori F."/>
            <person name="Ohara O."/>
            <person name="Okazaki Y."/>
            <person name="Orlando V."/>
            <person name="Pang K.C."/>
            <person name="Pavan W.J."/>
            <person name="Pavesi G."/>
            <person name="Pesole G."/>
            <person name="Petrovsky N."/>
            <person name="Piazza S."/>
            <person name="Reed J."/>
            <person name="Reid J.F."/>
            <person name="Ring B.Z."/>
            <person name="Ringwald M."/>
            <person name="Rost B."/>
            <person name="Ruan Y."/>
            <person name="Salzberg S.L."/>
            <person name="Sandelin A."/>
            <person name="Schneider C."/>
            <person name="Schoenbach C."/>
            <person name="Sekiguchi K."/>
            <person name="Semple C.A."/>
            <person name="Seno S."/>
            <person name="Sessa L."/>
            <person name="Sheng Y."/>
            <person name="Shibata Y."/>
            <person name="Shimada H."/>
            <person name="Shimada K."/>
            <person name="Silva D."/>
            <person name="Sinclair B."/>
            <person name="Sperling S."/>
            <person name="Stupka E."/>
            <person name="Sugiura K."/>
            <person name="Sultana R."/>
            <person name="Takenaka Y."/>
            <person name="Taki K."/>
            <person name="Tammoja K."/>
            <person name="Tan S.L."/>
            <person name="Tang S."/>
            <person name="Taylor M.S."/>
            <person name="Tegner J."/>
            <person name="Teichmann S.A."/>
            <person name="Ueda H.R."/>
            <person name="van Nimwegen E."/>
            <person name="Verardo R."/>
            <person name="Wei C.L."/>
            <person name="Yagi K."/>
            <person name="Yamanishi H."/>
            <person name="Zabarovsky E."/>
            <person name="Zhu S."/>
            <person name="Zimmer A."/>
            <person name="Hide W."/>
            <person name="Bult C."/>
            <person name="Grimmond S.M."/>
            <person name="Teasdale R.D."/>
            <person name="Liu E.T."/>
            <person name="Brusic V."/>
            <person name="Quackenbush J."/>
            <person name="Wahlestedt C."/>
            <person name="Mattick J.S."/>
            <person name="Hume D.A."/>
            <person name="Kai C."/>
            <person name="Sasaki D."/>
            <person name="Tomaru Y."/>
            <person name="Fukuda S."/>
            <person name="Kanamori-Katayama M."/>
            <person name="Suzuki M."/>
            <person name="Aoki J."/>
            <person name="Arakawa T."/>
            <person name="Iida J."/>
            <person name="Imamura K."/>
            <person name="Itoh M."/>
            <person name="Kato T."/>
            <person name="Kawaji H."/>
            <person name="Kawagashira N."/>
            <person name="Kawashima T."/>
            <person name="Kojima M."/>
            <person name="Kondo S."/>
            <person name="Konno H."/>
            <person name="Nakano K."/>
            <person name="Ninomiya N."/>
            <person name="Nishio T."/>
            <person name="Okada M."/>
            <person name="Plessy C."/>
            <person name="Shibata K."/>
            <person name="Shiraki T."/>
            <person name="Suzuki S."/>
            <person name="Tagami M."/>
            <person name="Waki K."/>
            <person name="Watahiki A."/>
            <person name="Okamura-Oho Y."/>
            <person name="Suzuki H."/>
            <person name="Kawai J."/>
            <person name="Hayashizaki Y."/>
        </authorList>
    </citation>
    <scope>NUCLEOTIDE SEQUENCE [LARGE SCALE MRNA]</scope>
    <source>
        <strain>C57BL/6J</strain>
        <tissue>Thymus</tissue>
    </source>
</reference>
<reference key="5">
    <citation type="journal article" date="2009" name="PLoS Biol.">
        <title>Lineage-specific biology revealed by a finished genome assembly of the mouse.</title>
        <authorList>
            <person name="Church D.M."/>
            <person name="Goodstadt L."/>
            <person name="Hillier L.W."/>
            <person name="Zody M.C."/>
            <person name="Goldstein S."/>
            <person name="She X."/>
            <person name="Bult C.J."/>
            <person name="Agarwala R."/>
            <person name="Cherry J.L."/>
            <person name="DiCuccio M."/>
            <person name="Hlavina W."/>
            <person name="Kapustin Y."/>
            <person name="Meric P."/>
            <person name="Maglott D."/>
            <person name="Birtle Z."/>
            <person name="Marques A.C."/>
            <person name="Graves T."/>
            <person name="Zhou S."/>
            <person name="Teague B."/>
            <person name="Potamousis K."/>
            <person name="Churas C."/>
            <person name="Place M."/>
            <person name="Herschleb J."/>
            <person name="Runnheim R."/>
            <person name="Forrest D."/>
            <person name="Amos-Landgraf J."/>
            <person name="Schwartz D.C."/>
            <person name="Cheng Z."/>
            <person name="Lindblad-Toh K."/>
            <person name="Eichler E.E."/>
            <person name="Ponting C.P."/>
        </authorList>
    </citation>
    <scope>NUCLEOTIDE SEQUENCE [LARGE SCALE GENOMIC DNA]</scope>
    <source>
        <strain>C57BL/6J</strain>
    </source>
</reference>
<reference key="6">
    <citation type="journal article" date="2004" name="Genome Res.">
        <title>The status, quality, and expansion of the NIH full-length cDNA project: the Mammalian Gene Collection (MGC).</title>
        <authorList>
            <consortium name="The MGC Project Team"/>
        </authorList>
    </citation>
    <scope>NUCLEOTIDE SEQUENCE [LARGE SCALE MRNA]</scope>
    <source>
        <tissue>Brain</tissue>
    </source>
</reference>
<comment type="function">
    <text>Potentially involved in T-cell development. Recombinant protein shows chemotactic activity on thymocytes, macrophages, THP-1 cells, and dendritics cells but is inactive on peripheral blood lymphocytes and neutrophils. Binds to CCR9. Binds to atypical chemokine receptor ACKR4 and mediates the recruitment of beta-arrestin (ARRB1/2) to ACKR4.</text>
</comment>
<comment type="subcellular location">
    <subcellularLocation>
        <location>Secreted</location>
    </subcellularLocation>
</comment>
<comment type="tissue specificity">
    <text>Specifically expressed by thymic dendritic cells. High levels in thymus and small intestine.</text>
</comment>
<comment type="similarity">
    <text evidence="4">Belongs to the intercrine beta (chemokine CC) family.</text>
</comment>
<dbReference type="EMBL" id="U86357">
    <property type="protein sequence ID" value="AAB69982.1"/>
    <property type="molecule type" value="mRNA"/>
</dbReference>
<dbReference type="EMBL" id="AJ249480">
    <property type="protein sequence ID" value="CAB55762.1"/>
    <property type="molecule type" value="mRNA"/>
</dbReference>
<dbReference type="EMBL" id="DQ158256">
    <property type="protein sequence ID" value="AAZ99719.1"/>
    <property type="molecule type" value="mRNA"/>
</dbReference>
<dbReference type="EMBL" id="AK134138">
    <property type="protein sequence ID" value="BAE22030.1"/>
    <property type="molecule type" value="mRNA"/>
</dbReference>
<dbReference type="EMBL" id="AC155164">
    <property type="status" value="NOT_ANNOTATED_CDS"/>
    <property type="molecule type" value="Genomic_DNA"/>
</dbReference>
<dbReference type="EMBL" id="BC117033">
    <property type="protein sequence ID" value="AAI17034.1"/>
    <property type="molecule type" value="mRNA"/>
</dbReference>
<dbReference type="EMBL" id="BC117037">
    <property type="protein sequence ID" value="AAI17038.1"/>
    <property type="molecule type" value="mRNA"/>
</dbReference>
<dbReference type="CCDS" id="CCDS22085.1"/>
<dbReference type="RefSeq" id="NP_033164.1">
    <property type="nucleotide sequence ID" value="NM_009138.3"/>
</dbReference>
<dbReference type="RefSeq" id="XP_011240345.2">
    <property type="nucleotide sequence ID" value="XM_011242043.2"/>
</dbReference>
<dbReference type="RefSeq" id="XP_011240346.2">
    <property type="nucleotide sequence ID" value="XM_011242044.2"/>
</dbReference>
<dbReference type="RefSeq" id="XP_036009733.1">
    <property type="nucleotide sequence ID" value="XM_036153840.1"/>
</dbReference>
<dbReference type="RefSeq" id="XP_036009734.1">
    <property type="nucleotide sequence ID" value="XM_036153841.1"/>
</dbReference>
<dbReference type="RefSeq" id="XP_036009735.1">
    <property type="nucleotide sequence ID" value="XM_036153842.1"/>
</dbReference>
<dbReference type="RefSeq" id="XP_036009736.1">
    <property type="nucleotide sequence ID" value="XM_036153843.1"/>
</dbReference>
<dbReference type="RefSeq" id="XP_036009737.1">
    <property type="nucleotide sequence ID" value="XM_036153844.1"/>
</dbReference>
<dbReference type="RefSeq" id="XP_036009738.1">
    <property type="nucleotide sequence ID" value="XM_036153845.1"/>
</dbReference>
<dbReference type="RefSeq" id="XP_036009739.1">
    <property type="nucleotide sequence ID" value="XM_036153846.1"/>
</dbReference>
<dbReference type="RefSeq" id="XP_036009740.1">
    <property type="nucleotide sequence ID" value="XM_036153847.1"/>
</dbReference>
<dbReference type="RefSeq" id="XP_036009741.1">
    <property type="nucleotide sequence ID" value="XM_036153848.1"/>
</dbReference>
<dbReference type="SMR" id="O35903"/>
<dbReference type="BioGRID" id="203125">
    <property type="interactions" value="1"/>
</dbReference>
<dbReference type="DIP" id="DIP-5885N"/>
<dbReference type="FunCoup" id="O35903">
    <property type="interactions" value="924"/>
</dbReference>
<dbReference type="IntAct" id="O35903">
    <property type="interactions" value="5"/>
</dbReference>
<dbReference type="MINT" id="O35903"/>
<dbReference type="STRING" id="10090.ENSMUSP00000024004"/>
<dbReference type="PhosphoSitePlus" id="O35903"/>
<dbReference type="PaxDb" id="10090-ENSMUSP00000024004"/>
<dbReference type="ProteomicsDB" id="281329"/>
<dbReference type="DNASU" id="20300"/>
<dbReference type="Ensembl" id="ENSMUST00000024004.9">
    <property type="protein sequence ID" value="ENSMUSP00000024004.8"/>
    <property type="gene ID" value="ENSMUSG00000023235.15"/>
</dbReference>
<dbReference type="GeneID" id="20300"/>
<dbReference type="KEGG" id="mmu:20300"/>
<dbReference type="UCSC" id="uc009ktw.2">
    <property type="organism name" value="mouse"/>
</dbReference>
<dbReference type="AGR" id="MGI:1099448"/>
<dbReference type="CTD" id="6370"/>
<dbReference type="MGI" id="MGI:1099448">
    <property type="gene designation" value="Ccl25"/>
</dbReference>
<dbReference type="VEuPathDB" id="HostDB:ENSMUSG00000023235"/>
<dbReference type="eggNOG" id="ENOG502S8D1">
    <property type="taxonomic scope" value="Eukaryota"/>
</dbReference>
<dbReference type="GeneTree" id="ENSGT01010000222539"/>
<dbReference type="InParanoid" id="O35903"/>
<dbReference type="OrthoDB" id="9930747at2759"/>
<dbReference type="TreeFam" id="TF353160"/>
<dbReference type="Reactome" id="R-MMU-380108">
    <property type="pathway name" value="Chemokine receptors bind chemokines"/>
</dbReference>
<dbReference type="Reactome" id="R-MMU-418594">
    <property type="pathway name" value="G alpha (i) signalling events"/>
</dbReference>
<dbReference type="BioGRID-ORCS" id="20300">
    <property type="hits" value="2 hits in 81 CRISPR screens"/>
</dbReference>
<dbReference type="ChiTaRS" id="Ccl25">
    <property type="organism name" value="mouse"/>
</dbReference>
<dbReference type="PRO" id="PR:O35903"/>
<dbReference type="Proteomes" id="UP000000589">
    <property type="component" value="Chromosome 8"/>
</dbReference>
<dbReference type="RNAct" id="O35903">
    <property type="molecule type" value="protein"/>
</dbReference>
<dbReference type="Bgee" id="ENSMUSG00000023235">
    <property type="expression patterns" value="Expressed in small intestine Peyer's patch and 178 other cell types or tissues"/>
</dbReference>
<dbReference type="ExpressionAtlas" id="O35903">
    <property type="expression patterns" value="baseline and differential"/>
</dbReference>
<dbReference type="GO" id="GO:0005615">
    <property type="term" value="C:extracellular space"/>
    <property type="evidence" value="ECO:0007669"/>
    <property type="project" value="UniProtKB-KW"/>
</dbReference>
<dbReference type="GO" id="GO:0008009">
    <property type="term" value="F:chemokine activity"/>
    <property type="evidence" value="ECO:0000314"/>
    <property type="project" value="MGI"/>
</dbReference>
<dbReference type="GO" id="GO:0042379">
    <property type="term" value="F:chemokine receptor binding"/>
    <property type="evidence" value="ECO:0000250"/>
    <property type="project" value="UniProtKB"/>
</dbReference>
<dbReference type="GO" id="GO:0006935">
    <property type="term" value="P:chemotaxis"/>
    <property type="evidence" value="ECO:0000314"/>
    <property type="project" value="MGI"/>
</dbReference>
<dbReference type="GO" id="GO:0006955">
    <property type="term" value="P:immune response"/>
    <property type="evidence" value="ECO:0007669"/>
    <property type="project" value="InterPro"/>
</dbReference>
<dbReference type="GO" id="GO:0006954">
    <property type="term" value="P:inflammatory response"/>
    <property type="evidence" value="ECO:0007669"/>
    <property type="project" value="UniProtKB-KW"/>
</dbReference>
<dbReference type="GO" id="GO:0050900">
    <property type="term" value="P:leukocyte migration"/>
    <property type="evidence" value="ECO:0000314"/>
    <property type="project" value="MGI"/>
</dbReference>
<dbReference type="GO" id="GO:0097534">
    <property type="term" value="P:lymphoid lineage cell migration"/>
    <property type="evidence" value="ECO:0000314"/>
    <property type="project" value="MGI"/>
</dbReference>
<dbReference type="CDD" id="cd01119">
    <property type="entry name" value="Chemokine_CC_DCCL"/>
    <property type="match status" value="1"/>
</dbReference>
<dbReference type="FunFam" id="2.40.50.40:FF:000026">
    <property type="entry name" value="C-C motif chemokine 25"/>
    <property type="match status" value="1"/>
</dbReference>
<dbReference type="Gene3D" id="2.40.50.40">
    <property type="match status" value="1"/>
</dbReference>
<dbReference type="InterPro" id="IPR034133">
    <property type="entry name" value="Chemokine_CC_DCCL"/>
</dbReference>
<dbReference type="InterPro" id="IPR001811">
    <property type="entry name" value="Chemokine_IL8-like_dom"/>
</dbReference>
<dbReference type="InterPro" id="IPR036048">
    <property type="entry name" value="Interleukin_8-like_sf"/>
</dbReference>
<dbReference type="Pfam" id="PF00048">
    <property type="entry name" value="IL8"/>
    <property type="match status" value="1"/>
</dbReference>
<dbReference type="SMART" id="SM00199">
    <property type="entry name" value="SCY"/>
    <property type="match status" value="1"/>
</dbReference>
<dbReference type="SUPFAM" id="SSF54117">
    <property type="entry name" value="Interleukin 8-like chemokines"/>
    <property type="match status" value="1"/>
</dbReference>
<name>CCL25_MOUSE</name>
<feature type="signal peptide" evidence="2">
    <location>
        <begin position="1"/>
        <end position="23"/>
    </location>
</feature>
<feature type="chain" id="PRO_0000005236" description="C-C motif chemokine 25">
    <location>
        <begin position="24"/>
        <end position="144"/>
    </location>
</feature>
<feature type="region of interest" description="Disordered" evidence="3">
    <location>
        <begin position="98"/>
        <end position="144"/>
    </location>
</feature>
<feature type="compositionally biased region" description="Polar residues" evidence="3">
    <location>
        <begin position="118"/>
        <end position="127"/>
    </location>
</feature>
<feature type="disulfide bond" evidence="1">
    <location>
        <begin position="30"/>
        <end position="58"/>
    </location>
</feature>
<feature type="disulfide bond" evidence="1">
    <location>
        <begin position="31"/>
        <end position="73"/>
    </location>
</feature>
<feature type="sequence conflict" description="In Ref. 1; AAB69982." evidence="4" ref="1">
    <original>M</original>
    <variation>I</variation>
    <location>
        <position position="85"/>
    </location>
</feature>
<sequence length="144" mass="16733">MKLWLFACLVACFVGAWMPVVHAQGAFEDCCLGYQHRIKWNVLRHARNYHQQEVSGSCNLRAVRFYFRQKVVCGNPEDMNVKRAMRILTARKRLVHWKSASDSQTERKKSNHMKSKVENPNSTSVRSATLGHPRMVMMPRKTNN</sequence>
<gene>
    <name type="primary">Ccl25</name>
    <name type="synonym">Scya25</name>
    <name type="synonym">Teck</name>
</gene>
<keyword id="KW-0145">Chemotaxis</keyword>
<keyword id="KW-0202">Cytokine</keyword>
<keyword id="KW-1015">Disulfide bond</keyword>
<keyword id="KW-0395">Inflammatory response</keyword>
<keyword id="KW-1185">Reference proteome</keyword>
<keyword id="KW-0964">Secreted</keyword>
<keyword id="KW-0732">Signal</keyword>